<name>FADA_SHEFN</name>
<evidence type="ECO:0000255" key="1">
    <source>
        <dbReference type="HAMAP-Rule" id="MF_01620"/>
    </source>
</evidence>
<protein>
    <recommendedName>
        <fullName evidence="1">3-ketoacyl-CoA thiolase</fullName>
        <ecNumber evidence="1">2.3.1.16</ecNumber>
    </recommendedName>
    <alternativeName>
        <fullName evidence="1">Acetyl-CoA acyltransferase</fullName>
    </alternativeName>
    <alternativeName>
        <fullName evidence="1">Beta-ketothiolase</fullName>
    </alternativeName>
    <alternativeName>
        <fullName evidence="1">Fatty acid oxidation complex subunit beta</fullName>
    </alternativeName>
</protein>
<gene>
    <name evidence="1" type="primary">fadA</name>
    <name type="ordered locus">Sfri_0012</name>
</gene>
<organism>
    <name type="scientific">Shewanella frigidimarina (strain NCIMB 400)</name>
    <dbReference type="NCBI Taxonomy" id="318167"/>
    <lineage>
        <taxon>Bacteria</taxon>
        <taxon>Pseudomonadati</taxon>
        <taxon>Pseudomonadota</taxon>
        <taxon>Gammaproteobacteria</taxon>
        <taxon>Alteromonadales</taxon>
        <taxon>Shewanellaceae</taxon>
        <taxon>Shewanella</taxon>
    </lineage>
</organism>
<comment type="function">
    <text evidence="1">Catalyzes the final step of fatty acid oxidation in which acetyl-CoA is released and the CoA ester of a fatty acid two carbons shorter is formed.</text>
</comment>
<comment type="catalytic activity">
    <reaction evidence="1">
        <text>an acyl-CoA + acetyl-CoA = a 3-oxoacyl-CoA + CoA</text>
        <dbReference type="Rhea" id="RHEA:21564"/>
        <dbReference type="ChEBI" id="CHEBI:57287"/>
        <dbReference type="ChEBI" id="CHEBI:57288"/>
        <dbReference type="ChEBI" id="CHEBI:58342"/>
        <dbReference type="ChEBI" id="CHEBI:90726"/>
        <dbReference type="EC" id="2.3.1.16"/>
    </reaction>
</comment>
<comment type="pathway">
    <text evidence="1">Lipid metabolism; fatty acid beta-oxidation.</text>
</comment>
<comment type="subunit">
    <text evidence="1">Heterotetramer of two alpha chains (FadB) and two beta chains (FadA).</text>
</comment>
<comment type="subcellular location">
    <subcellularLocation>
        <location evidence="1">Cytoplasm</location>
    </subcellularLocation>
</comment>
<comment type="similarity">
    <text evidence="1">Belongs to the thiolase-like superfamily. Thiolase family.</text>
</comment>
<keyword id="KW-0012">Acyltransferase</keyword>
<keyword id="KW-0963">Cytoplasm</keyword>
<keyword id="KW-0276">Fatty acid metabolism</keyword>
<keyword id="KW-0442">Lipid degradation</keyword>
<keyword id="KW-0443">Lipid metabolism</keyword>
<keyword id="KW-1185">Reference proteome</keyword>
<keyword id="KW-0808">Transferase</keyword>
<dbReference type="EC" id="2.3.1.16" evidence="1"/>
<dbReference type="EMBL" id="CP000447">
    <property type="protein sequence ID" value="ABI69875.1"/>
    <property type="molecule type" value="Genomic_DNA"/>
</dbReference>
<dbReference type="RefSeq" id="WP_011635504.1">
    <property type="nucleotide sequence ID" value="NC_008345.1"/>
</dbReference>
<dbReference type="SMR" id="Q08A40"/>
<dbReference type="STRING" id="318167.Sfri_0012"/>
<dbReference type="KEGG" id="sfr:Sfri_0012"/>
<dbReference type="eggNOG" id="COG0183">
    <property type="taxonomic scope" value="Bacteria"/>
</dbReference>
<dbReference type="HOGENOM" id="CLU_031026_2_3_6"/>
<dbReference type="OrthoDB" id="8951704at2"/>
<dbReference type="UniPathway" id="UPA00659"/>
<dbReference type="Proteomes" id="UP000000684">
    <property type="component" value="Chromosome"/>
</dbReference>
<dbReference type="GO" id="GO:0005737">
    <property type="term" value="C:cytoplasm"/>
    <property type="evidence" value="ECO:0007669"/>
    <property type="project" value="UniProtKB-SubCell"/>
</dbReference>
<dbReference type="GO" id="GO:0003988">
    <property type="term" value="F:acetyl-CoA C-acyltransferase activity"/>
    <property type="evidence" value="ECO:0007669"/>
    <property type="project" value="UniProtKB-UniRule"/>
</dbReference>
<dbReference type="GO" id="GO:0006635">
    <property type="term" value="P:fatty acid beta-oxidation"/>
    <property type="evidence" value="ECO:0007669"/>
    <property type="project" value="UniProtKB-UniRule"/>
</dbReference>
<dbReference type="GO" id="GO:0010124">
    <property type="term" value="P:phenylacetate catabolic process"/>
    <property type="evidence" value="ECO:0007669"/>
    <property type="project" value="TreeGrafter"/>
</dbReference>
<dbReference type="CDD" id="cd00751">
    <property type="entry name" value="thiolase"/>
    <property type="match status" value="1"/>
</dbReference>
<dbReference type="FunFam" id="3.40.47.10:FF:000010">
    <property type="entry name" value="Acetyl-CoA acetyltransferase (Thiolase)"/>
    <property type="match status" value="1"/>
</dbReference>
<dbReference type="Gene3D" id="3.40.47.10">
    <property type="match status" value="2"/>
</dbReference>
<dbReference type="HAMAP" id="MF_01620">
    <property type="entry name" value="FadA"/>
    <property type="match status" value="1"/>
</dbReference>
<dbReference type="InterPro" id="IPR012805">
    <property type="entry name" value="FadA"/>
</dbReference>
<dbReference type="InterPro" id="IPR002155">
    <property type="entry name" value="Thiolase"/>
</dbReference>
<dbReference type="InterPro" id="IPR016039">
    <property type="entry name" value="Thiolase-like"/>
</dbReference>
<dbReference type="InterPro" id="IPR050215">
    <property type="entry name" value="Thiolase-like_sf_Thiolase"/>
</dbReference>
<dbReference type="InterPro" id="IPR020615">
    <property type="entry name" value="Thiolase_acyl_enz_int_AS"/>
</dbReference>
<dbReference type="InterPro" id="IPR020610">
    <property type="entry name" value="Thiolase_AS"/>
</dbReference>
<dbReference type="InterPro" id="IPR020617">
    <property type="entry name" value="Thiolase_C"/>
</dbReference>
<dbReference type="InterPro" id="IPR020613">
    <property type="entry name" value="Thiolase_CS"/>
</dbReference>
<dbReference type="InterPro" id="IPR020616">
    <property type="entry name" value="Thiolase_N"/>
</dbReference>
<dbReference type="NCBIfam" id="TIGR01930">
    <property type="entry name" value="AcCoA-C-Actrans"/>
    <property type="match status" value="1"/>
</dbReference>
<dbReference type="NCBIfam" id="TIGR02445">
    <property type="entry name" value="fadA"/>
    <property type="match status" value="1"/>
</dbReference>
<dbReference type="NCBIfam" id="NF006510">
    <property type="entry name" value="PRK08947.1"/>
    <property type="match status" value="1"/>
</dbReference>
<dbReference type="PANTHER" id="PTHR43853:SF11">
    <property type="entry name" value="3-KETOACYL-COA THIOLASE FADA"/>
    <property type="match status" value="1"/>
</dbReference>
<dbReference type="PANTHER" id="PTHR43853">
    <property type="entry name" value="3-KETOACYL-COA THIOLASE, PEROXISOMAL"/>
    <property type="match status" value="1"/>
</dbReference>
<dbReference type="Pfam" id="PF02803">
    <property type="entry name" value="Thiolase_C"/>
    <property type="match status" value="1"/>
</dbReference>
<dbReference type="Pfam" id="PF00108">
    <property type="entry name" value="Thiolase_N"/>
    <property type="match status" value="1"/>
</dbReference>
<dbReference type="PIRSF" id="PIRSF000429">
    <property type="entry name" value="Ac-CoA_Ac_transf"/>
    <property type="match status" value="1"/>
</dbReference>
<dbReference type="SUPFAM" id="SSF53901">
    <property type="entry name" value="Thiolase-like"/>
    <property type="match status" value="2"/>
</dbReference>
<dbReference type="PROSITE" id="PS00098">
    <property type="entry name" value="THIOLASE_1"/>
    <property type="match status" value="1"/>
</dbReference>
<dbReference type="PROSITE" id="PS00737">
    <property type="entry name" value="THIOLASE_2"/>
    <property type="match status" value="1"/>
</dbReference>
<dbReference type="PROSITE" id="PS00099">
    <property type="entry name" value="THIOLASE_3"/>
    <property type="match status" value="1"/>
</dbReference>
<proteinExistence type="inferred from homology"/>
<sequence length="387" mass="40697">MKQAVIVDCIRTPMGRSKAGVFRNVRAETLSAELMKALMVRNPQLDPNDIEDVIWGCVQQTLEQGFNIARNASLLAGIPKTAGAVTVNRLCGSSMDALHQAARAIMTGQGDTFIIGGVEHMGHVPMNHGVDFHPGLANRVAKASGMMGLTAEMLGKMHGITREQQDAFAVRSHQRAHAATIEGRFAKEIWGIEGHDANGALIKVMTDEVIRPETTLESLAGLRPAFDPVNGTVTAGTSSALSDGASAMLVMEESKARALGLTIRARIRSMAVAGCDAAIMGYGPVPATKKALARAGLSVADLDLIELNEAFAAQSLPCVKDLGLQDVVDEKINLNGGAIALGHPLGCSGARISTTLINLMEEKDATLGLATMCIGLGQGIATVFERV</sequence>
<reference key="1">
    <citation type="submission" date="2006-08" db="EMBL/GenBank/DDBJ databases">
        <title>Complete sequence of Shewanella frigidimarina NCIMB 400.</title>
        <authorList>
            <consortium name="US DOE Joint Genome Institute"/>
            <person name="Copeland A."/>
            <person name="Lucas S."/>
            <person name="Lapidus A."/>
            <person name="Barry K."/>
            <person name="Detter J.C."/>
            <person name="Glavina del Rio T."/>
            <person name="Hammon N."/>
            <person name="Israni S."/>
            <person name="Dalin E."/>
            <person name="Tice H."/>
            <person name="Pitluck S."/>
            <person name="Fredrickson J.K."/>
            <person name="Kolker E."/>
            <person name="McCuel L.A."/>
            <person name="DiChristina T."/>
            <person name="Nealson K.H."/>
            <person name="Newman D."/>
            <person name="Tiedje J.M."/>
            <person name="Zhou J."/>
            <person name="Romine M.F."/>
            <person name="Culley D.E."/>
            <person name="Serres M."/>
            <person name="Chertkov O."/>
            <person name="Brettin T."/>
            <person name="Bruce D."/>
            <person name="Han C."/>
            <person name="Tapia R."/>
            <person name="Gilna P."/>
            <person name="Schmutz J."/>
            <person name="Larimer F."/>
            <person name="Land M."/>
            <person name="Hauser L."/>
            <person name="Kyrpides N."/>
            <person name="Mikhailova N."/>
            <person name="Richardson P."/>
        </authorList>
    </citation>
    <scope>NUCLEOTIDE SEQUENCE [LARGE SCALE GENOMIC DNA]</scope>
    <source>
        <strain>NCIMB 400</strain>
    </source>
</reference>
<accession>Q08A40</accession>
<feature type="chain" id="PRO_0000292902" description="3-ketoacyl-CoA thiolase">
    <location>
        <begin position="1"/>
        <end position="387"/>
    </location>
</feature>
<feature type="active site" description="Acyl-thioester intermediate" evidence="1">
    <location>
        <position position="91"/>
    </location>
</feature>
<feature type="active site" description="Proton acceptor" evidence="1">
    <location>
        <position position="343"/>
    </location>
</feature>
<feature type="active site" description="Proton acceptor" evidence="1">
    <location>
        <position position="373"/>
    </location>
</feature>